<proteinExistence type="evidence at protein level"/>
<dbReference type="EMBL" id="U53876">
    <property type="protein sequence ID" value="AAB67538.1"/>
    <property type="molecule type" value="Genomic_DNA"/>
</dbReference>
<dbReference type="EMBL" id="Z73266">
    <property type="protein sequence ID" value="CAA97656.1"/>
    <property type="molecule type" value="Genomic_DNA"/>
</dbReference>
<dbReference type="EMBL" id="Z73267">
    <property type="protein sequence ID" value="CAA97658.1"/>
    <property type="molecule type" value="Genomic_DNA"/>
</dbReference>
<dbReference type="EMBL" id="AY692795">
    <property type="protein sequence ID" value="AAT92814.1"/>
    <property type="molecule type" value="Genomic_DNA"/>
</dbReference>
<dbReference type="EMBL" id="BK006945">
    <property type="protein sequence ID" value="DAA09410.1"/>
    <property type="molecule type" value="Genomic_DNA"/>
</dbReference>
<dbReference type="PIR" id="S64928">
    <property type="entry name" value="S64928"/>
</dbReference>
<dbReference type="RefSeq" id="NP_013195.1">
    <property type="nucleotide sequence ID" value="NM_001181981.1"/>
</dbReference>
<dbReference type="BioGRID" id="31367">
    <property type="interactions" value="73"/>
</dbReference>
<dbReference type="DIP" id="DIP-4473N"/>
<dbReference type="FunCoup" id="Q12418">
    <property type="interactions" value="46"/>
</dbReference>
<dbReference type="IntAct" id="Q12418">
    <property type="interactions" value="10"/>
</dbReference>
<dbReference type="STRING" id="4932.YLR094C"/>
<dbReference type="iPTMnet" id="Q12418"/>
<dbReference type="PaxDb" id="4932-YLR094C"/>
<dbReference type="PeptideAtlas" id="Q12418"/>
<dbReference type="EnsemblFungi" id="YLR094C_mRNA">
    <property type="protein sequence ID" value="YLR094C"/>
    <property type="gene ID" value="YLR094C"/>
</dbReference>
<dbReference type="GeneID" id="850783"/>
<dbReference type="KEGG" id="sce:YLR094C"/>
<dbReference type="AGR" id="SGD:S000004084"/>
<dbReference type="SGD" id="S000004084">
    <property type="gene designation" value="GIS3"/>
</dbReference>
<dbReference type="VEuPathDB" id="FungiDB:YLR094C"/>
<dbReference type="eggNOG" id="ENOG502SGNS">
    <property type="taxonomic scope" value="Eukaryota"/>
</dbReference>
<dbReference type="HOGENOM" id="CLU_041586_0_0_1"/>
<dbReference type="InParanoid" id="Q12418"/>
<dbReference type="OMA" id="ITRRKLW"/>
<dbReference type="OrthoDB" id="4088353at2759"/>
<dbReference type="BioCyc" id="YEAST:G3O-32244-MONOMER"/>
<dbReference type="BioGRID-ORCS" id="850783">
    <property type="hits" value="1 hit in 10 CRISPR screens"/>
</dbReference>
<dbReference type="PRO" id="PR:Q12418"/>
<dbReference type="Proteomes" id="UP000002311">
    <property type="component" value="Chromosome XII"/>
</dbReference>
<dbReference type="RNAct" id="Q12418">
    <property type="molecule type" value="protein"/>
</dbReference>
<dbReference type="GO" id="GO:0005737">
    <property type="term" value="C:cytoplasm"/>
    <property type="evidence" value="ECO:0007005"/>
    <property type="project" value="SGD"/>
</dbReference>
<dbReference type="GO" id="GO:0005634">
    <property type="term" value="C:nucleus"/>
    <property type="evidence" value="ECO:0007005"/>
    <property type="project" value="SGD"/>
</dbReference>
<dbReference type="GO" id="GO:0035556">
    <property type="term" value="P:intracellular signal transduction"/>
    <property type="evidence" value="ECO:0000315"/>
    <property type="project" value="SGD"/>
</dbReference>
<feature type="chain" id="PRO_0000087497" description="Protein GIS3">
    <location>
        <begin position="1"/>
        <end position="502"/>
    </location>
</feature>
<gene>
    <name type="primary">GIS3</name>
    <name type="ordered locus">YLR094C</name>
</gene>
<sequence length="502" mass="56357">MLLDVNTNHTLMHDAHVHEHCLIKSIRDDGALHSWSDSSKVFYPKSFYATATNKKNNKLASASMNKTATSNRTVSDEIYFHSTKPQFDGQGSAERTRTLTKRNSFKRTRILKARDDSELLNENRSSLMTPSLSSVMSQVRKTNSAKTLSGECPIHEGHLTQSIKRKFSEEAQSDCSSLSSSKLHPLTDDIADAVDLQTPAIGDEVLAEPVVPKMKIININDLDLFDDWEVKDLVDIFPPVYERRPRSSSALSLVSASSDAKLRPTSVDFQIIDKKGGKTSRRKSRSKSTTENMIYENDLVELEQWPSASPSPETDGSIASSELLPNKRIRQKSLNTNFLKLYSIETSCKRKSILPEVEVDDHLLKQLTYSEIRSLEIKKEPNVSTNDIKLALITRKKLWSDMVHETRNDLFGDSTPWNLHFVATTSNTEPSQGRESASEHATADLKSSLVRVHSDVKPWFNNGGTMLKPCGKLNLGKVTNKTSAPTREIQYVVKGWCDSRFL</sequence>
<comment type="subcellular location">
    <subcellularLocation>
        <location evidence="1">Cytoplasm</location>
    </subcellularLocation>
    <subcellularLocation>
        <location evidence="1">Nucleus</location>
    </subcellularLocation>
</comment>
<comment type="miscellaneous">
    <text evidence="2">Present with 1055 molecules/cell in log phase SD medium.</text>
</comment>
<evidence type="ECO:0000269" key="1">
    <source>
    </source>
</evidence>
<evidence type="ECO:0000269" key="2">
    <source>
    </source>
</evidence>
<protein>
    <recommendedName>
        <fullName>Protein GIS3</fullName>
    </recommendedName>
</protein>
<reference key="1">
    <citation type="journal article" date="1997" name="Nature">
        <title>The nucleotide sequence of Saccharomyces cerevisiae chromosome XII.</title>
        <authorList>
            <person name="Johnston M."/>
            <person name="Hillier L.W."/>
            <person name="Riles L."/>
            <person name="Albermann K."/>
            <person name="Andre B."/>
            <person name="Ansorge W."/>
            <person name="Benes V."/>
            <person name="Brueckner M."/>
            <person name="Delius H."/>
            <person name="Dubois E."/>
            <person name="Duesterhoeft A."/>
            <person name="Entian K.-D."/>
            <person name="Floeth M."/>
            <person name="Goffeau A."/>
            <person name="Hebling U."/>
            <person name="Heumann K."/>
            <person name="Heuss-Neitzel D."/>
            <person name="Hilbert H."/>
            <person name="Hilger F."/>
            <person name="Kleine K."/>
            <person name="Koetter P."/>
            <person name="Louis E.J."/>
            <person name="Messenguy F."/>
            <person name="Mewes H.-W."/>
            <person name="Miosga T."/>
            <person name="Moestl D."/>
            <person name="Mueller-Auer S."/>
            <person name="Nentwich U."/>
            <person name="Obermaier B."/>
            <person name="Piravandi E."/>
            <person name="Pohl T.M."/>
            <person name="Portetelle D."/>
            <person name="Purnelle B."/>
            <person name="Rechmann S."/>
            <person name="Rieger M."/>
            <person name="Rinke M."/>
            <person name="Rose M."/>
            <person name="Scharfe M."/>
            <person name="Scherens B."/>
            <person name="Scholler P."/>
            <person name="Schwager C."/>
            <person name="Schwarz S."/>
            <person name="Underwood A.P."/>
            <person name="Urrestarazu L.A."/>
            <person name="Vandenbol M."/>
            <person name="Verhasselt P."/>
            <person name="Vierendeels F."/>
            <person name="Voet M."/>
            <person name="Volckaert G."/>
            <person name="Voss H."/>
            <person name="Wambutt R."/>
            <person name="Wedler E."/>
            <person name="Wedler H."/>
            <person name="Zimmermann F.K."/>
            <person name="Zollner A."/>
            <person name="Hani J."/>
            <person name="Hoheisel J.D."/>
        </authorList>
    </citation>
    <scope>NUCLEOTIDE SEQUENCE [LARGE SCALE GENOMIC DNA]</scope>
    <source>
        <strain>ATCC 204508 / S288c</strain>
    </source>
</reference>
<reference key="2">
    <citation type="journal article" date="2014" name="G3 (Bethesda)">
        <title>The reference genome sequence of Saccharomyces cerevisiae: Then and now.</title>
        <authorList>
            <person name="Engel S.R."/>
            <person name="Dietrich F.S."/>
            <person name="Fisk D.G."/>
            <person name="Binkley G."/>
            <person name="Balakrishnan R."/>
            <person name="Costanzo M.C."/>
            <person name="Dwight S.S."/>
            <person name="Hitz B.C."/>
            <person name="Karra K."/>
            <person name="Nash R.S."/>
            <person name="Weng S."/>
            <person name="Wong E.D."/>
            <person name="Lloyd P."/>
            <person name="Skrzypek M.S."/>
            <person name="Miyasato S.R."/>
            <person name="Simison M."/>
            <person name="Cherry J.M."/>
        </authorList>
    </citation>
    <scope>GENOME REANNOTATION</scope>
    <source>
        <strain>ATCC 204508 / S288c</strain>
    </source>
</reference>
<reference key="3">
    <citation type="journal article" date="2007" name="Genome Res.">
        <title>Approaching a complete repository of sequence-verified protein-encoding clones for Saccharomyces cerevisiae.</title>
        <authorList>
            <person name="Hu Y."/>
            <person name="Rolfs A."/>
            <person name="Bhullar B."/>
            <person name="Murthy T.V.S."/>
            <person name="Zhu C."/>
            <person name="Berger M.F."/>
            <person name="Camargo A.A."/>
            <person name="Kelley F."/>
            <person name="McCarron S."/>
            <person name="Jepson D."/>
            <person name="Richardson A."/>
            <person name="Raphael J."/>
            <person name="Moreira D."/>
            <person name="Taycher E."/>
            <person name="Zuo D."/>
            <person name="Mohr S."/>
            <person name="Kane M.F."/>
            <person name="Williamson J."/>
            <person name="Simpson A.J.G."/>
            <person name="Bulyk M.L."/>
            <person name="Harlow E."/>
            <person name="Marsischky G."/>
            <person name="Kolodner R.D."/>
            <person name="LaBaer J."/>
        </authorList>
    </citation>
    <scope>NUCLEOTIDE SEQUENCE [GENOMIC DNA]</scope>
    <source>
        <strain>ATCC 204508 / S288c</strain>
    </source>
</reference>
<reference key="4">
    <citation type="journal article" date="1999" name="Mol. Gen. Genet.">
        <title>Yeast genes GIS1-4: multicopy suppressors of the Gal- phenotype of snf1 mig1 srb8/10/11 cells.</title>
        <authorList>
            <person name="Balciunas D."/>
            <person name="Ronne H."/>
        </authorList>
    </citation>
    <scope>GENE NAME</scope>
</reference>
<reference key="5">
    <citation type="journal article" date="2003" name="Nature">
        <title>Global analysis of protein localization in budding yeast.</title>
        <authorList>
            <person name="Huh W.-K."/>
            <person name="Falvo J.V."/>
            <person name="Gerke L.C."/>
            <person name="Carroll A.S."/>
            <person name="Howson R.W."/>
            <person name="Weissman J.S."/>
            <person name="O'Shea E.K."/>
        </authorList>
    </citation>
    <scope>SUBCELLULAR LOCATION [LARGE SCALE ANALYSIS]</scope>
</reference>
<reference key="6">
    <citation type="journal article" date="2003" name="Nature">
        <title>Global analysis of protein expression in yeast.</title>
        <authorList>
            <person name="Ghaemmaghami S."/>
            <person name="Huh W.-K."/>
            <person name="Bower K."/>
            <person name="Howson R.W."/>
            <person name="Belle A."/>
            <person name="Dephoure N."/>
            <person name="O'Shea E.K."/>
            <person name="Weissman J.S."/>
        </authorList>
    </citation>
    <scope>LEVEL OF PROTEIN EXPRESSION [LARGE SCALE ANALYSIS]</scope>
</reference>
<reference key="7">
    <citation type="journal article" date="2008" name="Mol. Cell. Proteomics">
        <title>A multidimensional chromatography technology for in-depth phosphoproteome analysis.</title>
        <authorList>
            <person name="Albuquerque C.P."/>
            <person name="Smolka M.B."/>
            <person name="Payne S.H."/>
            <person name="Bafna V."/>
            <person name="Eng J."/>
            <person name="Zhou H."/>
        </authorList>
    </citation>
    <scope>IDENTIFICATION BY MASS SPECTROMETRY [LARGE SCALE ANALYSIS]</scope>
</reference>
<name>GIS3_YEAST</name>
<organism>
    <name type="scientific">Saccharomyces cerevisiae (strain ATCC 204508 / S288c)</name>
    <name type="common">Baker's yeast</name>
    <dbReference type="NCBI Taxonomy" id="559292"/>
    <lineage>
        <taxon>Eukaryota</taxon>
        <taxon>Fungi</taxon>
        <taxon>Dikarya</taxon>
        <taxon>Ascomycota</taxon>
        <taxon>Saccharomycotina</taxon>
        <taxon>Saccharomycetes</taxon>
        <taxon>Saccharomycetales</taxon>
        <taxon>Saccharomycetaceae</taxon>
        <taxon>Saccharomyces</taxon>
    </lineage>
</organism>
<keyword id="KW-0963">Cytoplasm</keyword>
<keyword id="KW-0539">Nucleus</keyword>
<keyword id="KW-1185">Reference proteome</keyword>
<accession>Q12418</accession>
<accession>D6VY94</accession>
<accession>Q7LGX3</accession>